<name>RL28_HAEIG</name>
<sequence>MSRVCQVTGKRPAVGNNRSHAMNATRRRFLPNLHTHRFWVESENRFVTLRLTAKGMRIIDKKGIDAVLAEIRARGEKI</sequence>
<dbReference type="EMBL" id="CP000672">
    <property type="protein sequence ID" value="ABR00499.1"/>
    <property type="molecule type" value="Genomic_DNA"/>
</dbReference>
<dbReference type="SMR" id="A5UI93"/>
<dbReference type="KEGG" id="hiq:CGSHiGG_08325"/>
<dbReference type="HOGENOM" id="CLU_064548_3_1_6"/>
<dbReference type="Proteomes" id="UP000001990">
    <property type="component" value="Chromosome"/>
</dbReference>
<dbReference type="GO" id="GO:0022625">
    <property type="term" value="C:cytosolic large ribosomal subunit"/>
    <property type="evidence" value="ECO:0007669"/>
    <property type="project" value="TreeGrafter"/>
</dbReference>
<dbReference type="GO" id="GO:0003735">
    <property type="term" value="F:structural constituent of ribosome"/>
    <property type="evidence" value="ECO:0007669"/>
    <property type="project" value="InterPro"/>
</dbReference>
<dbReference type="GO" id="GO:0006412">
    <property type="term" value="P:translation"/>
    <property type="evidence" value="ECO:0007669"/>
    <property type="project" value="UniProtKB-UniRule"/>
</dbReference>
<dbReference type="FunFam" id="2.30.170.40:FF:000001">
    <property type="entry name" value="50S ribosomal protein L28"/>
    <property type="match status" value="1"/>
</dbReference>
<dbReference type="Gene3D" id="2.30.170.40">
    <property type="entry name" value="Ribosomal protein L28/L24"/>
    <property type="match status" value="1"/>
</dbReference>
<dbReference type="HAMAP" id="MF_00373">
    <property type="entry name" value="Ribosomal_bL28"/>
    <property type="match status" value="1"/>
</dbReference>
<dbReference type="InterPro" id="IPR026569">
    <property type="entry name" value="Ribosomal_bL28"/>
</dbReference>
<dbReference type="InterPro" id="IPR034704">
    <property type="entry name" value="Ribosomal_bL28/bL31-like_sf"/>
</dbReference>
<dbReference type="InterPro" id="IPR001383">
    <property type="entry name" value="Ribosomal_bL28_bact-type"/>
</dbReference>
<dbReference type="InterPro" id="IPR037147">
    <property type="entry name" value="Ribosomal_bL28_sf"/>
</dbReference>
<dbReference type="NCBIfam" id="TIGR00009">
    <property type="entry name" value="L28"/>
    <property type="match status" value="1"/>
</dbReference>
<dbReference type="PANTHER" id="PTHR13528">
    <property type="entry name" value="39S RIBOSOMAL PROTEIN L28, MITOCHONDRIAL"/>
    <property type="match status" value="1"/>
</dbReference>
<dbReference type="PANTHER" id="PTHR13528:SF2">
    <property type="entry name" value="LARGE RIBOSOMAL SUBUNIT PROTEIN BL28M"/>
    <property type="match status" value="1"/>
</dbReference>
<dbReference type="Pfam" id="PF00830">
    <property type="entry name" value="Ribosomal_L28"/>
    <property type="match status" value="1"/>
</dbReference>
<dbReference type="SUPFAM" id="SSF143800">
    <property type="entry name" value="L28p-like"/>
    <property type="match status" value="1"/>
</dbReference>
<protein>
    <recommendedName>
        <fullName evidence="1">Large ribosomal subunit protein bL28</fullName>
    </recommendedName>
    <alternativeName>
        <fullName evidence="2">50S ribosomal protein L28</fullName>
    </alternativeName>
</protein>
<gene>
    <name evidence="1" type="primary">rpmB</name>
    <name type="ordered locus">CGSHiGG_08325</name>
</gene>
<feature type="chain" id="PRO_1000007248" description="Large ribosomal subunit protein bL28">
    <location>
        <begin position="1"/>
        <end position="78"/>
    </location>
</feature>
<reference key="1">
    <citation type="journal article" date="2007" name="Genome Biol.">
        <title>Characterization and modeling of the Haemophilus influenzae core and supragenomes based on the complete genomic sequences of Rd and 12 clinical nontypeable strains.</title>
        <authorList>
            <person name="Hogg J.S."/>
            <person name="Hu F.Z."/>
            <person name="Janto B."/>
            <person name="Boissy R."/>
            <person name="Hayes J."/>
            <person name="Keefe R."/>
            <person name="Post J.C."/>
            <person name="Ehrlich G.D."/>
        </authorList>
    </citation>
    <scope>NUCLEOTIDE SEQUENCE [LARGE SCALE GENOMIC DNA]</scope>
    <source>
        <strain>PittGG</strain>
    </source>
</reference>
<organism>
    <name type="scientific">Haemophilus influenzae (strain PittGG)</name>
    <dbReference type="NCBI Taxonomy" id="374931"/>
    <lineage>
        <taxon>Bacteria</taxon>
        <taxon>Pseudomonadati</taxon>
        <taxon>Pseudomonadota</taxon>
        <taxon>Gammaproteobacteria</taxon>
        <taxon>Pasteurellales</taxon>
        <taxon>Pasteurellaceae</taxon>
        <taxon>Haemophilus</taxon>
    </lineage>
</organism>
<evidence type="ECO:0000255" key="1">
    <source>
        <dbReference type="HAMAP-Rule" id="MF_00373"/>
    </source>
</evidence>
<evidence type="ECO:0000305" key="2"/>
<keyword id="KW-0687">Ribonucleoprotein</keyword>
<keyword id="KW-0689">Ribosomal protein</keyword>
<comment type="similarity">
    <text evidence="1">Belongs to the bacterial ribosomal protein bL28 family.</text>
</comment>
<proteinExistence type="inferred from homology"/>
<accession>A5UI93</accession>